<evidence type="ECO:0000269" key="1">
    <source>
    </source>
</evidence>
<evidence type="ECO:0000269" key="2">
    <source>
    </source>
</evidence>
<evidence type="ECO:0000269" key="3">
    <source>
    </source>
</evidence>
<evidence type="ECO:0000269" key="4">
    <source>
    </source>
</evidence>
<evidence type="ECO:0000269" key="5">
    <source>
    </source>
</evidence>
<evidence type="ECO:0000269" key="6">
    <source>
    </source>
</evidence>
<evidence type="ECO:0000269" key="7">
    <source>
    </source>
</evidence>
<evidence type="ECO:0000269" key="8">
    <source>
    </source>
</evidence>
<evidence type="ECO:0000269" key="9">
    <source>
    </source>
</evidence>
<evidence type="ECO:0000269" key="10">
    <source>
    </source>
</evidence>
<evidence type="ECO:0000269" key="11">
    <source>
    </source>
</evidence>
<evidence type="ECO:0000269" key="12">
    <source>
    </source>
</evidence>
<evidence type="ECO:0000269" key="13">
    <source>
    </source>
</evidence>
<evidence type="ECO:0000269" key="14">
    <source>
    </source>
</evidence>
<evidence type="ECO:0000269" key="15">
    <source>
    </source>
</evidence>
<evidence type="ECO:0000269" key="16">
    <source>
    </source>
</evidence>
<evidence type="ECO:0000269" key="17">
    <source>
    </source>
</evidence>
<evidence type="ECO:0000269" key="18">
    <source>
    </source>
</evidence>
<evidence type="ECO:0000269" key="19">
    <source>
    </source>
</evidence>
<evidence type="ECO:0000305" key="20"/>
<accession>P33418</accession>
<accession>D6VWZ8</accession>
<proteinExistence type="evidence at protein level"/>
<organism>
    <name type="scientific">Saccharomyces cerevisiae (strain ATCC 204508 / S288c)</name>
    <name type="common">Baker's yeast</name>
    <dbReference type="NCBI Taxonomy" id="559292"/>
    <lineage>
        <taxon>Eukaryota</taxon>
        <taxon>Fungi</taxon>
        <taxon>Dikarya</taxon>
        <taxon>Ascomycota</taxon>
        <taxon>Saccharomycotina</taxon>
        <taxon>Saccharomycetes</taxon>
        <taxon>Saccharomycetales</taxon>
        <taxon>Saccharomycetaceae</taxon>
        <taxon>Saccharomyces</taxon>
    </lineage>
</organism>
<protein>
    <recommendedName>
        <fullName>Exportin-T</fullName>
    </recommendedName>
    <alternativeName>
        <fullName>Exportin(tRNA)</fullName>
    </alternativeName>
    <alternativeName>
        <fullName>Karyopherin-beta</fullName>
    </alternativeName>
    <alternativeName>
        <fullName>tRNA exportin</fullName>
    </alternativeName>
</protein>
<feature type="chain" id="PRO_0000084460" description="Exportin-T">
    <location>
        <begin position="1"/>
        <end position="1100"/>
    </location>
</feature>
<name>XPOT_YEAST</name>
<reference key="1">
    <citation type="journal article" date="1993" name="J. Biol. Chem.">
        <title>The Saccharomyces cerevisiae LOS1 gene involved in pre-tRNA splicing encodes a nuclear protein that behaves as a component of the nuclear matrix.</title>
        <authorList>
            <person name="Shen W.-C."/>
            <person name="Selvakumar D."/>
            <person name="Stanford D.R."/>
            <person name="Hopper A.K."/>
        </authorList>
    </citation>
    <scope>NUCLEOTIDE SEQUENCE [GENOMIC DNA]</scope>
    <scope>SUBCELLULAR LOCATION</scope>
    <source>
        <strain>ATCC 204508 / S288c</strain>
    </source>
</reference>
<reference key="2">
    <citation type="journal article" date="1994" name="Nature">
        <title>Complete DNA sequence of yeast chromosome XI.</title>
        <authorList>
            <person name="Dujon B."/>
            <person name="Alexandraki D."/>
            <person name="Andre B."/>
            <person name="Ansorge W."/>
            <person name="Baladron V."/>
            <person name="Ballesta J.P.G."/>
            <person name="Banrevi A."/>
            <person name="Bolle P.-A."/>
            <person name="Bolotin-Fukuhara M."/>
            <person name="Bossier P."/>
            <person name="Bou G."/>
            <person name="Boyer J."/>
            <person name="Buitrago M.J."/>
            <person name="Cheret G."/>
            <person name="Colleaux L."/>
            <person name="Daignan-Fornier B."/>
            <person name="del Rey F."/>
            <person name="Dion C."/>
            <person name="Domdey H."/>
            <person name="Duesterhoeft A."/>
            <person name="Duesterhus S."/>
            <person name="Entian K.-D."/>
            <person name="Erfle H."/>
            <person name="Esteban P.F."/>
            <person name="Feldmann H."/>
            <person name="Fernandes L."/>
            <person name="Fobo G.M."/>
            <person name="Fritz C."/>
            <person name="Fukuhara H."/>
            <person name="Gabel C."/>
            <person name="Gaillon L."/>
            <person name="Garcia-Cantalejo J.M."/>
            <person name="Garcia-Ramirez J.J."/>
            <person name="Gent M.E."/>
            <person name="Ghazvini M."/>
            <person name="Goffeau A."/>
            <person name="Gonzalez A."/>
            <person name="Grothues D."/>
            <person name="Guerreiro P."/>
            <person name="Hegemann J.H."/>
            <person name="Hewitt N."/>
            <person name="Hilger F."/>
            <person name="Hollenberg C.P."/>
            <person name="Horaitis O."/>
            <person name="Indge K.J."/>
            <person name="Jacquier A."/>
            <person name="James C.M."/>
            <person name="Jauniaux J.-C."/>
            <person name="Jimenez A."/>
            <person name="Keuchel H."/>
            <person name="Kirchrath L."/>
            <person name="Kleine K."/>
            <person name="Koetter P."/>
            <person name="Legrain P."/>
            <person name="Liebl S."/>
            <person name="Louis E.J."/>
            <person name="Maia e Silva A."/>
            <person name="Marck C."/>
            <person name="Monnier A.-L."/>
            <person name="Moestl D."/>
            <person name="Mueller S."/>
            <person name="Obermaier B."/>
            <person name="Oliver S.G."/>
            <person name="Pallier C."/>
            <person name="Pascolo S."/>
            <person name="Pfeiffer F."/>
            <person name="Philippsen P."/>
            <person name="Planta R.J."/>
            <person name="Pohl F.M."/>
            <person name="Pohl T.M."/>
            <person name="Poehlmann R."/>
            <person name="Portetelle D."/>
            <person name="Purnelle B."/>
            <person name="Puzos V."/>
            <person name="Ramezani Rad M."/>
            <person name="Rasmussen S.W."/>
            <person name="Remacha M.A."/>
            <person name="Revuelta J.L."/>
            <person name="Richard G.-F."/>
            <person name="Rieger M."/>
            <person name="Rodrigues-Pousada C."/>
            <person name="Rose M."/>
            <person name="Rupp T."/>
            <person name="Santos M.A."/>
            <person name="Schwager C."/>
            <person name="Sensen C."/>
            <person name="Skala J."/>
            <person name="Soares H."/>
            <person name="Sor F."/>
            <person name="Stegemann J."/>
            <person name="Tettelin H."/>
            <person name="Thierry A."/>
            <person name="Tzermia M."/>
            <person name="Urrestarazu L.A."/>
            <person name="van Dyck L."/>
            <person name="van Vliet-Reedijk J.C."/>
            <person name="Valens M."/>
            <person name="Vandenbol M."/>
            <person name="Vilela C."/>
            <person name="Vissers S."/>
            <person name="von Wettstein D."/>
            <person name="Voss H."/>
            <person name="Wiemann S."/>
            <person name="Xu G."/>
            <person name="Zimmermann J."/>
            <person name="Haasemann M."/>
            <person name="Becker I."/>
            <person name="Mewes H.-W."/>
        </authorList>
    </citation>
    <scope>NUCLEOTIDE SEQUENCE [LARGE SCALE GENOMIC DNA]</scope>
    <source>
        <strain>ATCC 204508 / S288c</strain>
    </source>
</reference>
<reference key="3">
    <citation type="journal article" date="2014" name="G3 (Bethesda)">
        <title>The reference genome sequence of Saccharomyces cerevisiae: Then and now.</title>
        <authorList>
            <person name="Engel S.R."/>
            <person name="Dietrich F.S."/>
            <person name="Fisk D.G."/>
            <person name="Binkley G."/>
            <person name="Balakrishnan R."/>
            <person name="Costanzo M.C."/>
            <person name="Dwight S.S."/>
            <person name="Hitz B.C."/>
            <person name="Karra K."/>
            <person name="Nash R.S."/>
            <person name="Weng S."/>
            <person name="Wong E.D."/>
            <person name="Lloyd P."/>
            <person name="Skrzypek M.S."/>
            <person name="Miyasato S.R."/>
            <person name="Simison M."/>
            <person name="Cherry J.M."/>
        </authorList>
    </citation>
    <scope>GENOME REANNOTATION</scope>
    <source>
        <strain>ATCC 204508 / S288c</strain>
    </source>
</reference>
<reference key="4">
    <citation type="journal article" date="1980" name="Cell">
        <title>Processing of intervening sequences: a new yeast mutant which fails to excise intervening sequences from precursor tRNAs.</title>
        <authorList>
            <person name="Hopper A.K."/>
            <person name="Schultz L.D."/>
            <person name="Shapiro R.A."/>
        </authorList>
    </citation>
    <scope>DISRUPTION PHENOTYPE</scope>
</reference>
<reference key="5">
    <citation type="journal article" date="1987" name="Mol. Cell. Biol.">
        <title>Cloning and characterization of LOS1, a Saccharomyces cerevisiae gene that affects tRNA splicing.</title>
        <authorList>
            <person name="Hurt D.J."/>
            <person name="Wang S.S."/>
            <person name="Lin Y.-H."/>
            <person name="Hopper A.K."/>
        </authorList>
    </citation>
    <scope>DISRUPTION PHENOTYPE</scope>
</reference>
<reference key="6">
    <citation type="journal article" date="1996" name="EMBO J.">
        <title>Nuclear pore proteins are involved in the biogenesis of functional tRNA.</title>
        <authorList>
            <person name="Simos G."/>
            <person name="Tekotte H."/>
            <person name="Grosjean H."/>
            <person name="Segref A."/>
            <person name="Sharma K."/>
            <person name="Tollervey D."/>
            <person name="Hurt E.C."/>
        </authorList>
    </citation>
    <scope>FUNCTION</scope>
    <scope>SUBCELLULAR LOCATION</scope>
</reference>
<reference key="7">
    <citation type="journal article" date="1996" name="Genetics">
        <title>Los1p, involved in yeast pre-tRNA splicing, positively regulates members of the SOL gene family.</title>
        <authorList>
            <person name="Shen W.-C."/>
            <person name="Stanford D.R."/>
            <person name="Hopper A.K."/>
        </authorList>
    </citation>
    <scope>FUNCTION</scope>
</reference>
<reference key="8">
    <citation type="journal article" date="1998" name="Mol. Biol. Cell">
        <title>tRNA nuclear export in saccharomyces cerevisiae: in situ hybridization analysis.</title>
        <authorList>
            <person name="Sarkar S."/>
            <person name="Hopper A.K."/>
        </authorList>
    </citation>
    <scope>FUNCTION</scope>
</reference>
<reference key="9">
    <citation type="journal article" date="1998" name="Mol. Cell. Biol.">
        <title>Yeast Los1p has properties of an exportin-like nucleocytoplasmic transport factor for tRNA.</title>
        <authorList>
            <person name="Hellmuth K."/>
            <person name="Lau D.M."/>
            <person name="Bischoff F.R."/>
            <person name="Kuenzler M."/>
            <person name="Hurt E.C."/>
            <person name="Simos G."/>
        </authorList>
    </citation>
    <scope>FUNCTION</scope>
    <scope>INTERACTION WITH GSP1; GSP2; NSP1 AND NUP2</scope>
</reference>
<reference key="10">
    <citation type="journal article" date="1999" name="J. Cell Biol.">
        <title>A novel in vivo assay reveals inhibition of ribosomal nuclear export in ran-cycle and nucleoporin mutants.</title>
        <authorList>
            <person name="Hurt E.C."/>
            <person name="Hannus S."/>
            <person name="Schmelzl B."/>
            <person name="Lau D.M."/>
            <person name="Tollervey D."/>
            <person name="Simos G."/>
        </authorList>
    </citation>
    <scope>FUNCTION</scope>
</reference>
<reference key="11">
    <citation type="journal article" date="2000" name="Biochem. J.">
        <title>Nucleotides of the tRNA D-stem that play an important role in nuclear-tRNA export in Saccharomyces cerevisiae.</title>
        <authorList>
            <person name="Cleary J.D."/>
            <person name="Mangroo D."/>
        </authorList>
    </citation>
    <scope>FUNCTION</scope>
</reference>
<reference key="12">
    <citation type="journal article" date="2000" name="Genes Dev.">
        <title>An aminoacylation-dependent nuclear tRNA export pathway in yeast.</title>
        <authorList>
            <person name="Grosshans H."/>
            <person name="Hurt E.C."/>
            <person name="Simos G."/>
        </authorList>
    </citation>
    <scope>FUNCTION</scope>
</reference>
<reference key="13">
    <citation type="journal article" date="2000" name="Mol. Cell. Biol.">
        <title>Defects in tRNA processing and nuclear export induce GCN4 translation independently of phosphorylation of the alpha subunit of eukaryotic translation initiation factor 2.</title>
        <authorList>
            <person name="Qiu H."/>
            <person name="Hu C."/>
            <person name="Anderson J."/>
            <person name="Bjoerk G.R."/>
            <person name="Sarkar S."/>
            <person name="Hopper A.K."/>
            <person name="Hinnebusch A.G."/>
        </authorList>
    </citation>
    <scope>FUNCTION</scope>
</reference>
<reference key="14">
    <citation type="journal article" date="2003" name="Nature">
        <title>Global analysis of protein expression in yeast.</title>
        <authorList>
            <person name="Ghaemmaghami S."/>
            <person name="Huh W.-K."/>
            <person name="Bower K."/>
            <person name="Howson R.W."/>
            <person name="Belle A."/>
            <person name="Dephoure N."/>
            <person name="O'Shea E.K."/>
            <person name="Weissman J.S."/>
        </authorList>
    </citation>
    <scope>LEVEL OF PROTEIN EXPRESSION [LARGE SCALE ANALYSIS]</scope>
</reference>
<reference key="15">
    <citation type="journal article" date="2004" name="Biochem. J.">
        <title>The nuclear tRNA aminoacylation-dependent pathway may be the principal route used to export tRNA from the nucleus in Saccharomyces cerevisiae.</title>
        <authorList>
            <person name="Steiner-Mosonyi M."/>
            <person name="Mangroo D."/>
        </authorList>
    </citation>
    <scope>FUNCTION</scope>
</reference>
<reference key="16">
    <citation type="journal article" date="2005" name="Proc. Natl. Acad. Sci. U.S.A.">
        <title>Retrograde movement of tRNAs from the cytoplasm to the nucleus in Saccharomyces cerevisiae.</title>
        <authorList>
            <person name="Shaheen H.H."/>
            <person name="Hopper A.K."/>
        </authorList>
    </citation>
    <scope>FUNCTION</scope>
</reference>
<reference key="17">
    <citation type="journal article" date="2005" name="Science">
        <title>tRNA actively shuttles between the nucleus and cytosol in yeast.</title>
        <authorList>
            <person name="Takano A."/>
            <person name="Endo T."/>
            <person name="Yoshihisa T."/>
        </authorList>
    </citation>
    <scope>FUNCTION</scope>
</reference>
<reference key="18">
    <citation type="journal article" date="2007" name="Biochim. Biophys. Acta">
        <title>The localization of nuclear exporters of the importin-beta family is regulated by Snf1 kinase, nutrient supply and stress.</title>
        <authorList>
            <person name="Quan X."/>
            <person name="Yu J."/>
            <person name="Bussey H."/>
            <person name="Stochaj U."/>
        </authorList>
    </citation>
    <scope>SUBCELLULAR LOCATION</scope>
</reference>
<reference key="19">
    <citation type="journal article" date="2007" name="Cell">
        <title>Impaired tRNA nuclear export links DNA damage and cell-cycle checkpoint.</title>
        <authorList>
            <person name="Ghavidel A."/>
            <person name="Kislinger T."/>
            <person name="Pogoutse O."/>
            <person name="Sopko R."/>
            <person name="Jurisica I."/>
            <person name="Emili A."/>
        </authorList>
    </citation>
    <scope>FUNCTION</scope>
    <scope>SUBCELLULAR LOCATION</scope>
</reference>
<reference key="20">
    <citation type="journal article" date="2007" name="EMBO J.">
        <title>Cex1p is a novel cytoplasmic component of the Saccharomyces cerevisiae nuclear tRNA export machinery.</title>
        <authorList>
            <person name="McGuire A.T."/>
            <person name="Mangroo D."/>
        </authorList>
    </citation>
    <scope>FUNCTION</scope>
    <scope>INTERACTION WITH CEX1</scope>
</reference>
<reference key="21">
    <citation type="journal article" date="2007" name="Mol. Biol. Cell">
        <title>Utp8p is a nucleolar tRNA-binding protein that forms a complex with components of the nuclear tRNA export machinery in Saccharomyces cerevisiae.</title>
        <authorList>
            <person name="Strub B.R."/>
            <person name="Eswara M.B.K."/>
            <person name="Pierce J.B."/>
            <person name="Mangroo D."/>
        </authorList>
    </citation>
    <scope>INTERACTION WITH GSP1 AND UTP8</scope>
</reference>
<comment type="function">
    <text evidence="1 2 3 5 6 7 8 11 15 16 17 18 19">tRNA nucleus export receptor which facilitates tRNA translocation across the nuclear pore complex. Preferentially interacts with tRNAs with mature 5'- and 3'-termini and does not distinguish between intron-containing and spliced tRNAs. In the nucleus binds to tRNA and to the Ran-GTPases GSP1 or GSP2 in their active GTP-bound form. Docking of this trimeric complex to the nuclear pore complex (NPC) is mediated through binding to nucleoporins. Upon transit of a nuclear export complex into the cytoplasm, disassembling of the complex and hydrolysis of Ran-GTP to Ran-GDP cause release of the tRNA from the export receptor. The directionality of nuclear export is thought to be conferred by an asymmetric distribution of the GTP- and GDP-bound forms of Ran between the cytoplasm and nucleus.</text>
</comment>
<comment type="subunit">
    <text evidence="8 10 17">Interacts with CEX1, GSP1, GSP2, NSP1, NUP2 and UTP8.</text>
</comment>
<comment type="interaction">
    <interactant intactId="EBI-10188">
        <id>P33418</id>
    </interactant>
    <interactant intactId="EBI-31271">
        <id>Q12453</id>
        <label>CEX1</label>
    </interactant>
    <organismsDiffer>false</organismsDiffer>
    <experiments>2</experiments>
</comment>
<comment type="subcellular location">
    <subcellularLocation>
        <location evidence="9 14">Nucleus</location>
    </subcellularLocation>
    <subcellularLocation>
        <location evidence="9">Cytoplasm</location>
    </subcellularLocation>
    <text evidence="9">Shuttles between the nucleus and the cytoplasm and the localization is regulated by SNF1 kinase, nutrient supply and stress.</text>
</comment>
<comment type="disruption phenotype">
    <text evidence="12 13">Leads to the accumulation of pre-tRNAs.</text>
</comment>
<comment type="miscellaneous">
    <text evidence="4">Present with 3490 molecules/cell in log phase SD medium.</text>
</comment>
<comment type="similarity">
    <text evidence="20">Belongs to the exportin family.</text>
</comment>
<comment type="caution">
    <text evidence="12 13 17">Has been originally identified as involved in pre-tRNA splicing since its deletion accumulates pre-tRNAs (PubMed:3031485, PubMed:7363329). However, further studies have shown that it is actually a nuclear pore protein involved in transport of pre-tRNAs and mature tRNAs (PubMed:9774653).</text>
</comment>
<sequence length="1100" mass="126820">MLERIQQLVNAVNDPRSDVATKRQAIELLNGIKSSENALEIFISLVINENSNDLLKFYGLSTLIELMTEGVNANPNGLNLVKFEITKWLKFQVLGNKQTKLPDFLMNKISEVLTTLFMLMYSDCNGNQWNSFFDDLMSLFQVDSAISNTSPSTDGNILLGLEFFNKLCLMINSEIADQSFIRSKESQLKNNNIKDWMRDNDIMKLSNVWFQCLKLDEQIVSQCPGLINSTLDCIGSFISWIDINLIIDANNYYLQLIYKFLNLKETKISCYNCILAIISKKMKPMDKLAFLNMINLTNELTYYHQAISMNPQIITFDNLEVWESLTKLITSFGIEFTIIIEQVNDDQKLDTLYKQSVISNVDSILLEKIIPILLEFMNNEFDSITAKTFPFWSNYLAFLKKYKASSPNFVPLHKDFLDNFQQICFKRMKFSDDEVTQDDFEEFNETVRFKLKNFQEIIVVIDPSLFLNNISQEISANLMNCKNESWQIFELTIYQIFNLSECTKNNYFGLNKNEIMTSQPSLTLVRFLNELLMMKDFLLAIDNEQIQILFMELIVKNYNFIFSTSANTANATDDDEKYLLILNIFMSSFAMFNKRENVRLRSWYLFTRFLKLTRINLKKILFANKNLVNEITNKISPLLHIKVTSINAQGTDDNDTIFDNQLYIFEGIGFIITLNNSSQELTAATANTPIDYDILDQILTPLFTQLEGCITQGASPVVILECHHILMAIGTLARGLHIGLVPENQVNNMVVNKKLINDSLIHKFSNIAEVILVTFSFFNKFENIRDASRFTFARLIPILSNKILPFINKLIELILSSTDLKSWEMIDFLGFLSQLIHMFHTDTDCYQLFNQLLTPLINKVHSIIEEIDEQHDQQSSSNKPIDTAVTATSVNKNIVVTDSYRDKILLKKAYCTFLQSFTNNSVTSILLSDINRAILPVILNDLVTYTPQEIQETSMMKVSLNVLCNFIKCFGNGTCLDNDDINKDPNLKIDGLNEYFIMKCVPIIFEIPFNPIYKFNIKEGNFKTMAYDLARLLRELFIVSSNPTTNENECVKYLTQIYLPQIQLPQELTIQLVNMLTTMGQKQFEKWFVDNFISVLKQGQ</sequence>
<gene>
    <name type="primary">LOS1</name>
    <name type="ordered locus">YKL205W</name>
</gene>
<dbReference type="EMBL" id="L13941">
    <property type="protein sequence ID" value="AAC37342.1"/>
    <property type="molecule type" value="Unassigned_DNA"/>
</dbReference>
<dbReference type="EMBL" id="Z28205">
    <property type="protein sequence ID" value="CAA82050.1"/>
    <property type="molecule type" value="Genomic_DNA"/>
</dbReference>
<dbReference type="EMBL" id="BK006944">
    <property type="protein sequence ID" value="DAA08964.1"/>
    <property type="molecule type" value="Genomic_DNA"/>
</dbReference>
<dbReference type="PIR" id="S38043">
    <property type="entry name" value="S38043"/>
</dbReference>
<dbReference type="RefSeq" id="NP_012717.1">
    <property type="nucleotide sequence ID" value="NM_001179770.1"/>
</dbReference>
<dbReference type="SMR" id="P33418"/>
<dbReference type="BioGRID" id="33918">
    <property type="interactions" value="181"/>
</dbReference>
<dbReference type="DIP" id="DIP-760N"/>
<dbReference type="FunCoup" id="P33418">
    <property type="interactions" value="1200"/>
</dbReference>
<dbReference type="IntAct" id="P33418">
    <property type="interactions" value="9"/>
</dbReference>
<dbReference type="MINT" id="P33418"/>
<dbReference type="STRING" id="4932.YKL205W"/>
<dbReference type="TCDB" id="9.A.50.1.1">
    <property type="family name" value="the nuclear t-rna exporter (trna-e) family"/>
</dbReference>
<dbReference type="iPTMnet" id="P33418"/>
<dbReference type="PaxDb" id="4932-YKL205W"/>
<dbReference type="PeptideAtlas" id="P33418"/>
<dbReference type="EnsemblFungi" id="YKL205W_mRNA">
    <property type="protein sequence ID" value="YKL205W"/>
    <property type="gene ID" value="YKL205W"/>
</dbReference>
<dbReference type="GeneID" id="853630"/>
<dbReference type="KEGG" id="sce:YKL205W"/>
<dbReference type="AGR" id="SGD:S000001688"/>
<dbReference type="SGD" id="S000001688">
    <property type="gene designation" value="LOS1"/>
</dbReference>
<dbReference type="VEuPathDB" id="FungiDB:YKL205W"/>
<dbReference type="eggNOG" id="KOG2021">
    <property type="taxonomic scope" value="Eukaryota"/>
</dbReference>
<dbReference type="GeneTree" id="ENSGT00390000007890"/>
<dbReference type="HOGENOM" id="CLU_004414_0_1_1"/>
<dbReference type="InParanoid" id="P33418"/>
<dbReference type="OMA" id="HEMFLFG"/>
<dbReference type="OrthoDB" id="26399at2759"/>
<dbReference type="BioCyc" id="YEAST:G3O-31964-MONOMER"/>
<dbReference type="BioGRID-ORCS" id="853630">
    <property type="hits" value="0 hits in 10 CRISPR screens"/>
</dbReference>
<dbReference type="CD-CODE" id="E03F929F">
    <property type="entry name" value="Stress granule"/>
</dbReference>
<dbReference type="PRO" id="PR:P33418"/>
<dbReference type="Proteomes" id="UP000002311">
    <property type="component" value="Chromosome XI"/>
</dbReference>
<dbReference type="RNAct" id="P33418">
    <property type="molecule type" value="protein"/>
</dbReference>
<dbReference type="GO" id="GO:0005737">
    <property type="term" value="C:cytoplasm"/>
    <property type="evidence" value="ECO:0000314"/>
    <property type="project" value="SGD"/>
</dbReference>
<dbReference type="GO" id="GO:0005739">
    <property type="term" value="C:mitochondrion"/>
    <property type="evidence" value="ECO:0007005"/>
    <property type="project" value="SGD"/>
</dbReference>
<dbReference type="GO" id="GO:0016363">
    <property type="term" value="C:nuclear matrix"/>
    <property type="evidence" value="ECO:0000314"/>
    <property type="project" value="SGD"/>
</dbReference>
<dbReference type="GO" id="GO:0005643">
    <property type="term" value="C:nuclear pore"/>
    <property type="evidence" value="ECO:0000318"/>
    <property type="project" value="GO_Central"/>
</dbReference>
<dbReference type="GO" id="GO:0031267">
    <property type="term" value="F:small GTPase binding"/>
    <property type="evidence" value="ECO:0000314"/>
    <property type="project" value="SGD"/>
</dbReference>
<dbReference type="GO" id="GO:0000049">
    <property type="term" value="F:tRNA binding"/>
    <property type="evidence" value="ECO:0000318"/>
    <property type="project" value="GO_Central"/>
</dbReference>
<dbReference type="GO" id="GO:0006409">
    <property type="term" value="P:tRNA export from nucleus"/>
    <property type="evidence" value="ECO:0000315"/>
    <property type="project" value="SGD"/>
</dbReference>
<dbReference type="GO" id="GO:0071528">
    <property type="term" value="P:tRNA re-export from nucleus"/>
    <property type="evidence" value="ECO:0000316"/>
    <property type="project" value="SGD"/>
</dbReference>
<dbReference type="FunFam" id="1.25.10.10:FF:000621">
    <property type="entry name" value="Exportin-T"/>
    <property type="match status" value="1"/>
</dbReference>
<dbReference type="Gene3D" id="1.25.10.10">
    <property type="entry name" value="Leucine-rich Repeat Variant"/>
    <property type="match status" value="1"/>
</dbReference>
<dbReference type="InterPro" id="IPR011989">
    <property type="entry name" value="ARM-like"/>
</dbReference>
<dbReference type="InterPro" id="IPR016024">
    <property type="entry name" value="ARM-type_fold"/>
</dbReference>
<dbReference type="InterPro" id="IPR013598">
    <property type="entry name" value="Exportin-1/Importin-b-like"/>
</dbReference>
<dbReference type="InterPro" id="IPR045546">
    <property type="entry name" value="Exportin-T_C"/>
</dbReference>
<dbReference type="InterPro" id="IPR040017">
    <property type="entry name" value="XPOT"/>
</dbReference>
<dbReference type="PANTHER" id="PTHR15952:SF11">
    <property type="entry name" value="EXPORTIN-T"/>
    <property type="match status" value="1"/>
</dbReference>
<dbReference type="PANTHER" id="PTHR15952">
    <property type="entry name" value="EXPORTIN-T/LOS1"/>
    <property type="match status" value="1"/>
</dbReference>
<dbReference type="Pfam" id="PF19282">
    <property type="entry name" value="Exportin-T"/>
    <property type="match status" value="2"/>
</dbReference>
<dbReference type="Pfam" id="PF08389">
    <property type="entry name" value="Xpo1"/>
    <property type="match status" value="1"/>
</dbReference>
<dbReference type="SUPFAM" id="SSF48371">
    <property type="entry name" value="ARM repeat"/>
    <property type="match status" value="1"/>
</dbReference>
<keyword id="KW-0963">Cytoplasm</keyword>
<keyword id="KW-0539">Nucleus</keyword>
<keyword id="KW-1185">Reference proteome</keyword>
<keyword id="KW-0694">RNA-binding</keyword>
<keyword id="KW-0813">Transport</keyword>
<keyword id="KW-0820">tRNA-binding</keyword>